<reference key="1">
    <citation type="submission" date="2005-08" db="EMBL/GenBank/DDBJ databases">
        <title>Complete sequence of chromosome 1 of Nitrosospira multiformis ATCC 25196.</title>
        <authorList>
            <person name="Copeland A."/>
            <person name="Lucas S."/>
            <person name="Lapidus A."/>
            <person name="Barry K."/>
            <person name="Detter J.C."/>
            <person name="Glavina T."/>
            <person name="Hammon N."/>
            <person name="Israni S."/>
            <person name="Pitluck S."/>
            <person name="Chain P."/>
            <person name="Malfatti S."/>
            <person name="Shin M."/>
            <person name="Vergez L."/>
            <person name="Schmutz J."/>
            <person name="Larimer F."/>
            <person name="Land M."/>
            <person name="Hauser L."/>
            <person name="Kyrpides N."/>
            <person name="Lykidis A."/>
            <person name="Richardson P."/>
        </authorList>
    </citation>
    <scope>NUCLEOTIDE SEQUENCE [LARGE SCALE GENOMIC DNA]</scope>
    <source>
        <strain>ATCC 25196 / NCIMB 11849 / C 71</strain>
    </source>
</reference>
<keyword id="KW-0028">Amino-acid biosynthesis</keyword>
<keyword id="KW-0067">ATP-binding</keyword>
<keyword id="KW-0963">Cytoplasm</keyword>
<keyword id="KW-0368">Histidine biosynthesis</keyword>
<keyword id="KW-0378">Hydrolase</keyword>
<keyword id="KW-0547">Nucleotide-binding</keyword>
<keyword id="KW-1185">Reference proteome</keyword>
<feature type="chain" id="PRO_0000230182" description="Phosphoribosyl-ATP pyrophosphatase">
    <location>
        <begin position="1"/>
        <end position="121"/>
    </location>
</feature>
<proteinExistence type="inferred from homology"/>
<comment type="catalytic activity">
    <reaction evidence="1">
        <text>1-(5-phospho-beta-D-ribosyl)-ATP + H2O = 1-(5-phospho-beta-D-ribosyl)-5'-AMP + diphosphate + H(+)</text>
        <dbReference type="Rhea" id="RHEA:22828"/>
        <dbReference type="ChEBI" id="CHEBI:15377"/>
        <dbReference type="ChEBI" id="CHEBI:15378"/>
        <dbReference type="ChEBI" id="CHEBI:33019"/>
        <dbReference type="ChEBI" id="CHEBI:59457"/>
        <dbReference type="ChEBI" id="CHEBI:73183"/>
        <dbReference type="EC" id="3.6.1.31"/>
    </reaction>
</comment>
<comment type="pathway">
    <text evidence="1">Amino-acid biosynthesis; L-histidine biosynthesis; L-histidine from 5-phospho-alpha-D-ribose 1-diphosphate: step 2/9.</text>
</comment>
<comment type="subcellular location">
    <subcellularLocation>
        <location evidence="1">Cytoplasm</location>
    </subcellularLocation>
</comment>
<comment type="similarity">
    <text evidence="1">Belongs to the PRA-PH family.</text>
</comment>
<evidence type="ECO:0000255" key="1">
    <source>
        <dbReference type="HAMAP-Rule" id="MF_01020"/>
    </source>
</evidence>
<dbReference type="EC" id="3.6.1.31" evidence="1"/>
<dbReference type="EMBL" id="CP000103">
    <property type="protein sequence ID" value="ABB74119.1"/>
    <property type="molecule type" value="Genomic_DNA"/>
</dbReference>
<dbReference type="RefSeq" id="WP_011380167.1">
    <property type="nucleotide sequence ID" value="NC_007614.1"/>
</dbReference>
<dbReference type="SMR" id="Q2YAV2"/>
<dbReference type="STRING" id="323848.Nmul_A0812"/>
<dbReference type="KEGG" id="nmu:Nmul_A0812"/>
<dbReference type="eggNOG" id="COG0140">
    <property type="taxonomic scope" value="Bacteria"/>
</dbReference>
<dbReference type="HOGENOM" id="CLU_123337_1_2_4"/>
<dbReference type="OrthoDB" id="9814738at2"/>
<dbReference type="UniPathway" id="UPA00031">
    <property type="reaction ID" value="UER00007"/>
</dbReference>
<dbReference type="Proteomes" id="UP000002718">
    <property type="component" value="Chromosome"/>
</dbReference>
<dbReference type="GO" id="GO:0005737">
    <property type="term" value="C:cytoplasm"/>
    <property type="evidence" value="ECO:0007669"/>
    <property type="project" value="UniProtKB-SubCell"/>
</dbReference>
<dbReference type="GO" id="GO:0005524">
    <property type="term" value="F:ATP binding"/>
    <property type="evidence" value="ECO:0007669"/>
    <property type="project" value="UniProtKB-KW"/>
</dbReference>
<dbReference type="GO" id="GO:0004636">
    <property type="term" value="F:phosphoribosyl-ATP diphosphatase activity"/>
    <property type="evidence" value="ECO:0007669"/>
    <property type="project" value="UniProtKB-UniRule"/>
</dbReference>
<dbReference type="GO" id="GO:0000105">
    <property type="term" value="P:L-histidine biosynthetic process"/>
    <property type="evidence" value="ECO:0007669"/>
    <property type="project" value="UniProtKB-UniRule"/>
</dbReference>
<dbReference type="CDD" id="cd11534">
    <property type="entry name" value="NTP-PPase_HisIE_like"/>
    <property type="match status" value="1"/>
</dbReference>
<dbReference type="FunFam" id="1.10.287.1080:FF:000002">
    <property type="entry name" value="Histidine biosynthesis bifunctional protein HisIE"/>
    <property type="match status" value="1"/>
</dbReference>
<dbReference type="Gene3D" id="1.10.287.1080">
    <property type="entry name" value="MazG-like"/>
    <property type="match status" value="1"/>
</dbReference>
<dbReference type="HAMAP" id="MF_01020">
    <property type="entry name" value="HisE"/>
    <property type="match status" value="1"/>
</dbReference>
<dbReference type="InterPro" id="IPR008179">
    <property type="entry name" value="HisE"/>
</dbReference>
<dbReference type="InterPro" id="IPR021130">
    <property type="entry name" value="PRib-ATP_PPHydrolase-like"/>
</dbReference>
<dbReference type="NCBIfam" id="TIGR03188">
    <property type="entry name" value="histidine_hisI"/>
    <property type="match status" value="1"/>
</dbReference>
<dbReference type="NCBIfam" id="NF001611">
    <property type="entry name" value="PRK00400.1-3"/>
    <property type="match status" value="1"/>
</dbReference>
<dbReference type="PANTHER" id="PTHR42945">
    <property type="entry name" value="HISTIDINE BIOSYNTHESIS BIFUNCTIONAL PROTEIN"/>
    <property type="match status" value="1"/>
</dbReference>
<dbReference type="PANTHER" id="PTHR42945:SF9">
    <property type="entry name" value="HISTIDINE BIOSYNTHESIS BIFUNCTIONAL PROTEIN HISIE"/>
    <property type="match status" value="1"/>
</dbReference>
<dbReference type="Pfam" id="PF01503">
    <property type="entry name" value="PRA-PH"/>
    <property type="match status" value="1"/>
</dbReference>
<dbReference type="SUPFAM" id="SSF101386">
    <property type="entry name" value="all-alpha NTP pyrophosphatases"/>
    <property type="match status" value="1"/>
</dbReference>
<name>HIS2_NITMU</name>
<gene>
    <name evidence="1" type="primary">hisE</name>
    <name type="ordered locus">Nmul_A0812</name>
</gene>
<protein>
    <recommendedName>
        <fullName evidence="1">Phosphoribosyl-ATP pyrophosphatase</fullName>
        <shortName evidence="1">PRA-PH</shortName>
        <ecNumber evidence="1">3.6.1.31</ecNumber>
    </recommendedName>
</protein>
<accession>Q2YAV2</accession>
<organism>
    <name type="scientific">Nitrosospira multiformis (strain ATCC 25196 / NCIMB 11849 / C 71)</name>
    <dbReference type="NCBI Taxonomy" id="323848"/>
    <lineage>
        <taxon>Bacteria</taxon>
        <taxon>Pseudomonadati</taxon>
        <taxon>Pseudomonadota</taxon>
        <taxon>Betaproteobacteria</taxon>
        <taxon>Nitrosomonadales</taxon>
        <taxon>Nitrosomonadaceae</taxon>
        <taxon>Nitrosospira</taxon>
    </lineage>
</organism>
<sequence length="121" mass="13465">MSDPDILFRLAETIEARKQSDPHASYVAKLLHDGRDKILKKIAEESAEVLLASKDGDSTHVVRETADLWFHCLVLLAHHNLKLGDVLDELRRREGVSGIDEKAARKAGLADNGIGRMNQDK</sequence>